<proteinExistence type="inferred from homology"/>
<name>DNLI_METS3</name>
<accession>A5UKX2</accession>
<gene>
    <name evidence="1" type="primary">lig</name>
    <name type="ordered locus">Msm_0645</name>
</gene>
<dbReference type="EC" id="6.5.1.1" evidence="1"/>
<dbReference type="EMBL" id="CP000678">
    <property type="protein sequence ID" value="ABQ86850.1"/>
    <property type="molecule type" value="Genomic_DNA"/>
</dbReference>
<dbReference type="RefSeq" id="WP_004036507.1">
    <property type="nucleotide sequence ID" value="NZ_CP117965.1"/>
</dbReference>
<dbReference type="SMR" id="A5UKX2"/>
<dbReference type="STRING" id="420247.Msm_0645"/>
<dbReference type="EnsemblBacteria" id="ABQ86850">
    <property type="protein sequence ID" value="ABQ86850"/>
    <property type="gene ID" value="Msm_0645"/>
</dbReference>
<dbReference type="KEGG" id="msi:Msm_0645"/>
<dbReference type="PATRIC" id="fig|420247.28.peg.642"/>
<dbReference type="eggNOG" id="arCOG01347">
    <property type="taxonomic scope" value="Archaea"/>
</dbReference>
<dbReference type="HOGENOM" id="CLU_005138_6_0_2"/>
<dbReference type="Proteomes" id="UP000001992">
    <property type="component" value="Chromosome"/>
</dbReference>
<dbReference type="GO" id="GO:0005524">
    <property type="term" value="F:ATP binding"/>
    <property type="evidence" value="ECO:0007669"/>
    <property type="project" value="UniProtKB-UniRule"/>
</dbReference>
<dbReference type="GO" id="GO:0003677">
    <property type="term" value="F:DNA binding"/>
    <property type="evidence" value="ECO:0007669"/>
    <property type="project" value="InterPro"/>
</dbReference>
<dbReference type="GO" id="GO:0003910">
    <property type="term" value="F:DNA ligase (ATP) activity"/>
    <property type="evidence" value="ECO:0007669"/>
    <property type="project" value="UniProtKB-UniRule"/>
</dbReference>
<dbReference type="GO" id="GO:0046872">
    <property type="term" value="F:metal ion binding"/>
    <property type="evidence" value="ECO:0007669"/>
    <property type="project" value="UniProtKB-KW"/>
</dbReference>
<dbReference type="GO" id="GO:0051301">
    <property type="term" value="P:cell division"/>
    <property type="evidence" value="ECO:0007669"/>
    <property type="project" value="UniProtKB-KW"/>
</dbReference>
<dbReference type="GO" id="GO:0071897">
    <property type="term" value="P:DNA biosynthetic process"/>
    <property type="evidence" value="ECO:0007669"/>
    <property type="project" value="InterPro"/>
</dbReference>
<dbReference type="GO" id="GO:0006310">
    <property type="term" value="P:DNA recombination"/>
    <property type="evidence" value="ECO:0007669"/>
    <property type="project" value="UniProtKB-UniRule"/>
</dbReference>
<dbReference type="GO" id="GO:0006281">
    <property type="term" value="P:DNA repair"/>
    <property type="evidence" value="ECO:0007669"/>
    <property type="project" value="UniProtKB-UniRule"/>
</dbReference>
<dbReference type="GO" id="GO:0006273">
    <property type="term" value="P:lagging strand elongation"/>
    <property type="evidence" value="ECO:0007669"/>
    <property type="project" value="TreeGrafter"/>
</dbReference>
<dbReference type="CDD" id="cd07901">
    <property type="entry name" value="Adenylation_DNA_ligase_Arch_LigB"/>
    <property type="match status" value="1"/>
</dbReference>
<dbReference type="CDD" id="cd07972">
    <property type="entry name" value="OBF_DNA_ligase_Arch_LigB"/>
    <property type="match status" value="1"/>
</dbReference>
<dbReference type="FunFam" id="1.10.3260.10:FF:000007">
    <property type="entry name" value="DNA ligase"/>
    <property type="match status" value="1"/>
</dbReference>
<dbReference type="Gene3D" id="1.10.3260.10">
    <property type="entry name" value="DNA ligase, ATP-dependent, N-terminal domain"/>
    <property type="match status" value="1"/>
</dbReference>
<dbReference type="Gene3D" id="3.30.470.30">
    <property type="entry name" value="DNA ligase/mRNA capping enzyme"/>
    <property type="match status" value="1"/>
</dbReference>
<dbReference type="Gene3D" id="2.40.50.140">
    <property type="entry name" value="Nucleic acid-binding proteins"/>
    <property type="match status" value="1"/>
</dbReference>
<dbReference type="HAMAP" id="MF_00407">
    <property type="entry name" value="DNA_ligase"/>
    <property type="match status" value="1"/>
</dbReference>
<dbReference type="InterPro" id="IPR050191">
    <property type="entry name" value="ATP-dep_DNA_ligase"/>
</dbReference>
<dbReference type="InterPro" id="IPR022865">
    <property type="entry name" value="DNA_ligae_ATP-dep_bac/arc"/>
</dbReference>
<dbReference type="InterPro" id="IPR000977">
    <property type="entry name" value="DNA_ligase_ATP-dep"/>
</dbReference>
<dbReference type="InterPro" id="IPR012309">
    <property type="entry name" value="DNA_ligase_ATP-dep_C"/>
</dbReference>
<dbReference type="InterPro" id="IPR012310">
    <property type="entry name" value="DNA_ligase_ATP-dep_cent"/>
</dbReference>
<dbReference type="InterPro" id="IPR016059">
    <property type="entry name" value="DNA_ligase_ATP-dep_CS"/>
</dbReference>
<dbReference type="InterPro" id="IPR012308">
    <property type="entry name" value="DNA_ligase_ATP-dep_N"/>
</dbReference>
<dbReference type="InterPro" id="IPR036599">
    <property type="entry name" value="DNA_ligase_N_sf"/>
</dbReference>
<dbReference type="InterPro" id="IPR012340">
    <property type="entry name" value="NA-bd_OB-fold"/>
</dbReference>
<dbReference type="NCBIfam" id="TIGR00574">
    <property type="entry name" value="dnl1"/>
    <property type="match status" value="1"/>
</dbReference>
<dbReference type="PANTHER" id="PTHR45674:SF7">
    <property type="entry name" value="DNA LIGASE"/>
    <property type="match status" value="1"/>
</dbReference>
<dbReference type="PANTHER" id="PTHR45674">
    <property type="entry name" value="DNA LIGASE 1/3 FAMILY MEMBER"/>
    <property type="match status" value="1"/>
</dbReference>
<dbReference type="Pfam" id="PF04679">
    <property type="entry name" value="DNA_ligase_A_C"/>
    <property type="match status" value="1"/>
</dbReference>
<dbReference type="Pfam" id="PF01068">
    <property type="entry name" value="DNA_ligase_A_M"/>
    <property type="match status" value="1"/>
</dbReference>
<dbReference type="Pfam" id="PF04675">
    <property type="entry name" value="DNA_ligase_A_N"/>
    <property type="match status" value="1"/>
</dbReference>
<dbReference type="SUPFAM" id="SSF117018">
    <property type="entry name" value="ATP-dependent DNA ligase DNA-binding domain"/>
    <property type="match status" value="1"/>
</dbReference>
<dbReference type="SUPFAM" id="SSF56091">
    <property type="entry name" value="DNA ligase/mRNA capping enzyme, catalytic domain"/>
    <property type="match status" value="1"/>
</dbReference>
<dbReference type="SUPFAM" id="SSF50249">
    <property type="entry name" value="Nucleic acid-binding proteins"/>
    <property type="match status" value="1"/>
</dbReference>
<dbReference type="PROSITE" id="PS00333">
    <property type="entry name" value="DNA_LIGASE_A2"/>
    <property type="match status" value="1"/>
</dbReference>
<dbReference type="PROSITE" id="PS50160">
    <property type="entry name" value="DNA_LIGASE_A3"/>
    <property type="match status" value="1"/>
</dbReference>
<protein>
    <recommendedName>
        <fullName evidence="1">DNA ligase</fullName>
        <ecNumber evidence="1">6.5.1.1</ecNumber>
    </recommendedName>
    <alternativeName>
        <fullName evidence="1">Polydeoxyribonucleotide synthase [ATP]</fullName>
    </alternativeName>
</protein>
<comment type="function">
    <text evidence="1">DNA ligase that seals nicks in double-stranded DNA during DNA replication, DNA recombination and DNA repair.</text>
</comment>
<comment type="catalytic activity">
    <reaction evidence="1">
        <text>ATP + (deoxyribonucleotide)n-3'-hydroxyl + 5'-phospho-(deoxyribonucleotide)m = (deoxyribonucleotide)n+m + AMP + diphosphate.</text>
        <dbReference type="EC" id="6.5.1.1"/>
    </reaction>
</comment>
<comment type="cofactor">
    <cofactor evidence="1">
        <name>Mg(2+)</name>
        <dbReference type="ChEBI" id="CHEBI:18420"/>
    </cofactor>
</comment>
<comment type="similarity">
    <text evidence="1">Belongs to the ATP-dependent DNA ligase family.</text>
</comment>
<sequence>MKYQELVDVYSALENTTKRLEKTQIISNFLLKLDSTTLEQVGLLILGSIFPAWSDKEIGIGNKLVMQAVGEAVGVTPDKVEDAVRDQGDIGLACISLYAKKSQTTFFSQPLTIDFVFKSLRKLSEKSGARSTKRKIDIILEMLSQASASEAKYLTRTILEELRIGVGEGVVRDAIAQAFNIDKSVVERAMMLTNDLGLIAVVAKEKGEGGLKELNLTPGTPVKPMLAQLAPPIPEIINEMGVAICETKYDGIRLQVHRHSDEIKIFTRRLENITHALPEIVDLFNEYLPHEDYIVEGEVIATRDGNPLSFQNILHRVRRKHNIDEAMEQVPLKVFLFDLLYYIVPMIDEPLLKRRKKLEEIVNTTPDEINLSNMVYGTPDTIKEVEDLFELSIAQHHEGIMIKDAGEPYIPGLRGKKMLKYKAEPETLDMVVVGGTYGIGKRGDFVGSYLVSLRDEDNNLKTVAYVATGLDDATLEYLTKKMKEYELSTKGREIVVEPKIVLEVAFSEIVESPEYETGYSLRFPVVKNIRKDKGVDDIDTVERLISMYETQ</sequence>
<evidence type="ECO:0000255" key="1">
    <source>
        <dbReference type="HAMAP-Rule" id="MF_00407"/>
    </source>
</evidence>
<reference key="1">
    <citation type="journal article" date="2007" name="Proc. Natl. Acad. Sci. U.S.A.">
        <title>Genomic and metabolic adaptations of Methanobrevibacter smithii to the human gut.</title>
        <authorList>
            <person name="Samuel B.S."/>
            <person name="Hansen E.E."/>
            <person name="Manchester J.K."/>
            <person name="Coutinho P.M."/>
            <person name="Henrissat B."/>
            <person name="Fulton R."/>
            <person name="Latreille P."/>
            <person name="Kim K."/>
            <person name="Wilson R.K."/>
            <person name="Gordon J.I."/>
        </authorList>
    </citation>
    <scope>NUCLEOTIDE SEQUENCE [LARGE SCALE GENOMIC DNA]</scope>
    <source>
        <strain>ATCC 35061 / DSM 861 / OCM 144 / PS</strain>
    </source>
</reference>
<organism>
    <name type="scientific">Methanobrevibacter smithii (strain ATCC 35061 / DSM 861 / OCM 144 / PS)</name>
    <dbReference type="NCBI Taxonomy" id="420247"/>
    <lineage>
        <taxon>Archaea</taxon>
        <taxon>Methanobacteriati</taxon>
        <taxon>Methanobacteriota</taxon>
        <taxon>Methanomada group</taxon>
        <taxon>Methanobacteria</taxon>
        <taxon>Methanobacteriales</taxon>
        <taxon>Methanobacteriaceae</taxon>
        <taxon>Methanobrevibacter</taxon>
    </lineage>
</organism>
<feature type="chain" id="PRO_1000049872" description="DNA ligase">
    <location>
        <begin position="1"/>
        <end position="551"/>
    </location>
</feature>
<feature type="active site" description="N6-AMP-lysine intermediate" evidence="1">
    <location>
        <position position="248"/>
    </location>
</feature>
<feature type="binding site" evidence="1">
    <location>
        <position position="246"/>
    </location>
    <ligand>
        <name>ATP</name>
        <dbReference type="ChEBI" id="CHEBI:30616"/>
    </ligand>
</feature>
<feature type="binding site" evidence="1">
    <location>
        <position position="253"/>
    </location>
    <ligand>
        <name>ATP</name>
        <dbReference type="ChEBI" id="CHEBI:30616"/>
    </ligand>
</feature>
<feature type="binding site" evidence="1">
    <location>
        <position position="268"/>
    </location>
    <ligand>
        <name>ATP</name>
        <dbReference type="ChEBI" id="CHEBI:30616"/>
    </ligand>
</feature>
<feature type="binding site" evidence="1">
    <location>
        <position position="298"/>
    </location>
    <ligand>
        <name>ATP</name>
        <dbReference type="ChEBI" id="CHEBI:30616"/>
    </ligand>
</feature>
<feature type="binding site" evidence="1">
    <location>
        <position position="337"/>
    </location>
    <ligand>
        <name>ATP</name>
        <dbReference type="ChEBI" id="CHEBI:30616"/>
    </ligand>
</feature>
<feature type="binding site" evidence="1">
    <location>
        <position position="414"/>
    </location>
    <ligand>
        <name>ATP</name>
        <dbReference type="ChEBI" id="CHEBI:30616"/>
    </ligand>
</feature>
<feature type="binding site" evidence="1">
    <location>
        <position position="420"/>
    </location>
    <ligand>
        <name>ATP</name>
        <dbReference type="ChEBI" id="CHEBI:30616"/>
    </ligand>
</feature>
<keyword id="KW-0067">ATP-binding</keyword>
<keyword id="KW-0131">Cell cycle</keyword>
<keyword id="KW-0132">Cell division</keyword>
<keyword id="KW-0227">DNA damage</keyword>
<keyword id="KW-0233">DNA recombination</keyword>
<keyword id="KW-0234">DNA repair</keyword>
<keyword id="KW-0235">DNA replication</keyword>
<keyword id="KW-0436">Ligase</keyword>
<keyword id="KW-0460">Magnesium</keyword>
<keyword id="KW-0479">Metal-binding</keyword>
<keyword id="KW-0547">Nucleotide-binding</keyword>